<reference key="1">
    <citation type="submission" date="2004-11" db="EMBL/GenBank/DDBJ databases">
        <authorList>
            <consortium name="The German cDNA consortium"/>
        </authorList>
    </citation>
    <scope>NUCLEOTIDE SEQUENCE [LARGE SCALE MRNA]</scope>
    <source>
        <tissue>Kidney</tissue>
    </source>
</reference>
<sequence length="1066" mass="122488">MTDQENNNNISSNPFAALFGSLADAKQFAAIQKEQLKQQSDELPASPDDSDNSVSESLDEFDYSVAEISRSFRSQQEICEQLNINHMIQRIFLITLDNSDPSLKSGNGIPSRCVYLEEMAVELEDQDWLDMGNVEQALFARLLLQDPGNHLINMTSSTTLNLSADRDAGERHIFCYLYSCFQRAKEEITKVPENLLPFAVQCRNLTVSNTRTVLLTPEIYVDQNIHEQLVDLMLEAIQGAHFEDVTEFLEEVIEALILDEEVRTFSEVMIPVFDILLGRIKDLELCQILLYAYLDILLYFTRQKDMAKVFVEYIQPKDPTNGQMYQKTLLGVILNISCLLKTPGVVENHGYFLNPSRSSPQEIKVQEANIHQFMAQFHEKIYQMLKNLLQLSPETKHCILSWLGNCLHANAGRTKIWANQMPEIFFQMYASDAFFLNLGAALLKLCQPFCKPRSSRLLTFNPTYCALKELNDEERKIKNVHMRGLDKETCLIPAVQEPKFPQNYNLVTENLALTEYTLYLGFHRLHDQMVKINQNLHRLQVAWRDAQQSSSPAADSLREQFERLMTIYLSTKTAMTEPQMLQNCLNLQVSMAVLLVQLAIGNEGSQPIELTFPLPDGYSSLAYVPEFFADNLGDFLIFLRRFADDILETSADSLEHVLHFITIFTGSIERMKNPHLRAKLAEVLEAVMPHLDQTPNPLVSSVFHRKRVFCNFQYAPQLAEALIKVFVDIEFTGDPHQFEQKFNYRRPMYPILRYMWGTDTYRESIKDLADYASKNLEAMNPPLFLRFLNLLMNDAIFLLDEAIQYLSKIKIQQIEKDRGEWDSLTPEARREKEAGLQMFGQLARFHNIMSNETIGTLAFLTSEIKSLFVHPFLAERIISMLNYFLQHLVGPKMGALKVKDFSEFDFKPQQLVSDICTIYLNLGDEENFCATVPKDGRSYSPTLFAQTVRVLKKINKPGNMIVAFSNLAERIKSLADLQQQEEETYADACDEFLDPIMSTLMCDPVVLPSSRVTVDRSTIARHLLSDQTDPFNRSPLTMDQIRPNTELKEKIQRWLAERKQQKEQLE</sequence>
<keyword id="KW-0007">Acetylation</keyword>
<keyword id="KW-0963">Cytoplasm</keyword>
<keyword id="KW-1185">Reference proteome</keyword>
<keyword id="KW-0808">Transferase</keyword>
<keyword id="KW-0833">Ubl conjugation pathway</keyword>
<name>UBE4A_PONAB</name>
<dbReference type="EC" id="2.3.2.27" evidence="1"/>
<dbReference type="EMBL" id="CR858257">
    <property type="protein sequence ID" value="CAH90494.1"/>
    <property type="molecule type" value="mRNA"/>
</dbReference>
<dbReference type="EMBL" id="CR859425">
    <property type="protein sequence ID" value="CAH91597.1"/>
    <property type="molecule type" value="mRNA"/>
</dbReference>
<dbReference type="RefSeq" id="NP_001127294.1">
    <property type="nucleotide sequence ID" value="NM_001133822.1"/>
</dbReference>
<dbReference type="RefSeq" id="NP_001128821.2">
    <property type="nucleotide sequence ID" value="NM_001135349.2"/>
</dbReference>
<dbReference type="RefSeq" id="NP_001417490.1">
    <property type="nucleotide sequence ID" value="NM_001430561.1"/>
</dbReference>
<dbReference type="RefSeq" id="NP_001417491.1">
    <property type="nucleotide sequence ID" value="NM_001430562.1"/>
</dbReference>
<dbReference type="RefSeq" id="XP_063584091.1">
    <property type="nucleotide sequence ID" value="XM_063728021.1"/>
</dbReference>
<dbReference type="RefSeq" id="XP_063584093.1">
    <property type="nucleotide sequence ID" value="XM_063728023.1"/>
</dbReference>
<dbReference type="SMR" id="Q5R9G3"/>
<dbReference type="FunCoup" id="Q5R9G3">
    <property type="interactions" value="4635"/>
</dbReference>
<dbReference type="STRING" id="9601.ENSPPYP00000004503"/>
<dbReference type="GeneID" id="100189732"/>
<dbReference type="KEGG" id="pon:100189732"/>
<dbReference type="CTD" id="9354"/>
<dbReference type="eggNOG" id="KOG2042">
    <property type="taxonomic scope" value="Eukaryota"/>
</dbReference>
<dbReference type="InParanoid" id="Q5R9G3"/>
<dbReference type="OrthoDB" id="20295at2759"/>
<dbReference type="UniPathway" id="UPA00143"/>
<dbReference type="Proteomes" id="UP000001595">
    <property type="component" value="Unplaced"/>
</dbReference>
<dbReference type="GO" id="GO:0005737">
    <property type="term" value="C:cytoplasm"/>
    <property type="evidence" value="ECO:0007669"/>
    <property type="project" value="UniProtKB-SubCell"/>
</dbReference>
<dbReference type="GO" id="GO:0005634">
    <property type="term" value="C:nucleus"/>
    <property type="evidence" value="ECO:0007669"/>
    <property type="project" value="TreeGrafter"/>
</dbReference>
<dbReference type="GO" id="GO:0000151">
    <property type="term" value="C:ubiquitin ligase complex"/>
    <property type="evidence" value="ECO:0007669"/>
    <property type="project" value="InterPro"/>
</dbReference>
<dbReference type="GO" id="GO:0034450">
    <property type="term" value="F:ubiquitin-ubiquitin ligase activity"/>
    <property type="evidence" value="ECO:0007669"/>
    <property type="project" value="InterPro"/>
</dbReference>
<dbReference type="GO" id="GO:0036503">
    <property type="term" value="P:ERAD pathway"/>
    <property type="evidence" value="ECO:0007669"/>
    <property type="project" value="InterPro"/>
</dbReference>
<dbReference type="GO" id="GO:0000209">
    <property type="term" value="P:protein polyubiquitination"/>
    <property type="evidence" value="ECO:0007669"/>
    <property type="project" value="TreeGrafter"/>
</dbReference>
<dbReference type="GO" id="GO:0006511">
    <property type="term" value="P:ubiquitin-dependent protein catabolic process"/>
    <property type="evidence" value="ECO:0007669"/>
    <property type="project" value="InterPro"/>
</dbReference>
<dbReference type="CDD" id="cd16657">
    <property type="entry name" value="RING-Ubox_UBE4A"/>
    <property type="match status" value="1"/>
</dbReference>
<dbReference type="FunFam" id="3.30.40.10:FF:000055">
    <property type="entry name" value="Ubiquitin conjugation factor e4 a"/>
    <property type="match status" value="1"/>
</dbReference>
<dbReference type="Gene3D" id="3.30.40.10">
    <property type="entry name" value="Zinc/RING finger domain, C3HC4 (zinc finger)"/>
    <property type="match status" value="1"/>
</dbReference>
<dbReference type="InterPro" id="IPR019474">
    <property type="entry name" value="Ub_conjug_fac_E4_core"/>
</dbReference>
<dbReference type="InterPro" id="IPR045132">
    <property type="entry name" value="UBE4"/>
</dbReference>
<dbReference type="InterPro" id="IPR003613">
    <property type="entry name" value="Ubox_domain"/>
</dbReference>
<dbReference type="InterPro" id="IPR013083">
    <property type="entry name" value="Znf_RING/FYVE/PHD"/>
</dbReference>
<dbReference type="PANTHER" id="PTHR13931:SF16">
    <property type="entry name" value="UBIQUITIN CONJUGATION FACTOR E4 A"/>
    <property type="match status" value="1"/>
</dbReference>
<dbReference type="PANTHER" id="PTHR13931">
    <property type="entry name" value="UBIQUITINATION FACTOR E4"/>
    <property type="match status" value="1"/>
</dbReference>
<dbReference type="Pfam" id="PF04564">
    <property type="entry name" value="U-box"/>
    <property type="match status" value="1"/>
</dbReference>
<dbReference type="Pfam" id="PF10408">
    <property type="entry name" value="Ufd2P_core"/>
    <property type="match status" value="1"/>
</dbReference>
<dbReference type="SMART" id="SM00504">
    <property type="entry name" value="Ubox"/>
    <property type="match status" value="1"/>
</dbReference>
<dbReference type="SUPFAM" id="SSF57850">
    <property type="entry name" value="RING/U-box"/>
    <property type="match status" value="1"/>
</dbReference>
<dbReference type="PROSITE" id="PS51698">
    <property type="entry name" value="U_BOX"/>
    <property type="match status" value="1"/>
</dbReference>
<proteinExistence type="evidence at transcript level"/>
<protein>
    <recommendedName>
        <fullName evidence="6">Ubiquitin conjugation factor E4 A</fullName>
        <ecNumber evidence="1">2.3.2.27</ecNumber>
    </recommendedName>
    <alternativeName>
        <fullName>RING-type E3 ubiquitin transferase E4 A</fullName>
    </alternativeName>
</protein>
<feature type="chain" id="PRO_0000194991" description="Ubiquitin conjugation factor E4 A">
    <location>
        <begin position="1"/>
        <end position="1066"/>
    </location>
</feature>
<feature type="domain" description="U-box">
    <location>
        <begin position="987"/>
        <end position="1061"/>
    </location>
</feature>
<feature type="region of interest" description="Disordered" evidence="5">
    <location>
        <begin position="33"/>
        <end position="57"/>
    </location>
</feature>
<feature type="modified residue" description="N6-acetyllysine" evidence="3">
    <location>
        <position position="386"/>
    </location>
</feature>
<feature type="sequence conflict" description="In Ref. 1; CAH91597." evidence="6" ref="1">
    <original>F</original>
    <variation>S</variation>
    <location>
        <position position="460"/>
    </location>
</feature>
<feature type="sequence conflict" description="In Ref. 1; CAH90494." evidence="6" ref="1">
    <original>L</original>
    <variation>P</variation>
    <location>
        <position position="594"/>
    </location>
</feature>
<feature type="sequence conflict" description="In Ref. 1; CAH91597." evidence="6" ref="1">
    <original>Y</original>
    <variation>C</variation>
    <location>
        <position position="771"/>
    </location>
</feature>
<gene>
    <name evidence="6" type="primary">UBE4A</name>
</gene>
<organism>
    <name type="scientific">Pongo abelii</name>
    <name type="common">Sumatran orangutan</name>
    <name type="synonym">Pongo pygmaeus abelii</name>
    <dbReference type="NCBI Taxonomy" id="9601"/>
    <lineage>
        <taxon>Eukaryota</taxon>
        <taxon>Metazoa</taxon>
        <taxon>Chordata</taxon>
        <taxon>Craniata</taxon>
        <taxon>Vertebrata</taxon>
        <taxon>Euteleostomi</taxon>
        <taxon>Mammalia</taxon>
        <taxon>Eutheria</taxon>
        <taxon>Euarchontoglires</taxon>
        <taxon>Primates</taxon>
        <taxon>Haplorrhini</taxon>
        <taxon>Catarrhini</taxon>
        <taxon>Hominidae</taxon>
        <taxon>Pongo</taxon>
    </lineage>
</organism>
<accession>Q5R9G3</accession>
<accession>Q5RCL3</accession>
<comment type="function">
    <text evidence="1 2">Ubiquitin-protein ligase that probably functions as an E3 ligase in conjunction with specific E1 and E2 ligases. May also function as an E4 ligase mediating the assembly of polyubiquitin chains on substrates ubiquitinated by another E3 ubiquitin ligase. Mediates 'Lys-48'-linked polyubiquitination of substrates.</text>
</comment>
<comment type="catalytic activity">
    <reaction evidence="1">
        <text>S-ubiquitinyl-[E2 ubiquitin-conjugating enzyme]-L-cysteine + [acceptor protein]-L-lysine = [E2 ubiquitin-conjugating enzyme]-L-cysteine + N(6)-ubiquitinyl-[acceptor protein]-L-lysine.</text>
        <dbReference type="EC" id="2.3.2.27"/>
    </reaction>
</comment>
<comment type="pathway">
    <text evidence="1">Protein modification; protein ubiquitination.</text>
</comment>
<comment type="subcellular location">
    <subcellularLocation>
        <location evidence="1">Cytoplasm</location>
    </subcellularLocation>
</comment>
<comment type="domain">
    <text evidence="2 4">The U-box domain is required for the ubiquitin protein ligase activity.</text>
</comment>
<comment type="similarity">
    <text evidence="6">Belongs to the ubiquitin conjugation factor E4 family.</text>
</comment>
<evidence type="ECO:0000250" key="1">
    <source>
        <dbReference type="UniProtKB" id="E9Q735"/>
    </source>
</evidence>
<evidence type="ECO:0000250" key="2">
    <source>
        <dbReference type="UniProtKB" id="P54860"/>
    </source>
</evidence>
<evidence type="ECO:0000250" key="3">
    <source>
        <dbReference type="UniProtKB" id="Q14139"/>
    </source>
</evidence>
<evidence type="ECO:0000250" key="4">
    <source>
        <dbReference type="UniProtKB" id="Q9ES00"/>
    </source>
</evidence>
<evidence type="ECO:0000256" key="5">
    <source>
        <dbReference type="SAM" id="MobiDB-lite"/>
    </source>
</evidence>
<evidence type="ECO:0000305" key="6"/>